<feature type="chain" id="PRO_0000116982" description="Adenosylhomocysteinase">
    <location>
        <begin position="1"/>
        <end position="448"/>
    </location>
</feature>
<feature type="binding site" evidence="1">
    <location>
        <position position="61"/>
    </location>
    <ligand>
        <name>substrate</name>
    </ligand>
</feature>
<feature type="binding site" evidence="1">
    <location>
        <position position="136"/>
    </location>
    <ligand>
        <name>substrate</name>
    </ligand>
</feature>
<feature type="binding site" evidence="1">
    <location>
        <position position="161"/>
    </location>
    <ligand>
        <name>substrate</name>
    </ligand>
</feature>
<feature type="binding site" evidence="1">
    <location>
        <begin position="162"/>
        <end position="164"/>
    </location>
    <ligand>
        <name>NAD(+)</name>
        <dbReference type="ChEBI" id="CHEBI:57540"/>
    </ligand>
</feature>
<feature type="binding site" evidence="1">
    <location>
        <position position="191"/>
    </location>
    <ligand>
        <name>substrate</name>
    </ligand>
</feature>
<feature type="binding site" evidence="1">
    <location>
        <position position="195"/>
    </location>
    <ligand>
        <name>substrate</name>
    </ligand>
</feature>
<feature type="binding site" evidence="1">
    <location>
        <position position="196"/>
    </location>
    <ligand>
        <name>NAD(+)</name>
        <dbReference type="ChEBI" id="CHEBI:57540"/>
    </ligand>
</feature>
<feature type="binding site" evidence="1">
    <location>
        <begin position="225"/>
        <end position="230"/>
    </location>
    <ligand>
        <name>NAD(+)</name>
        <dbReference type="ChEBI" id="CHEBI:57540"/>
    </ligand>
</feature>
<feature type="binding site" evidence="1">
    <location>
        <position position="248"/>
    </location>
    <ligand>
        <name>NAD(+)</name>
        <dbReference type="ChEBI" id="CHEBI:57540"/>
    </ligand>
</feature>
<feature type="binding site" evidence="1">
    <location>
        <position position="283"/>
    </location>
    <ligand>
        <name>NAD(+)</name>
        <dbReference type="ChEBI" id="CHEBI:57540"/>
    </ligand>
</feature>
<feature type="binding site" evidence="1">
    <location>
        <begin position="304"/>
        <end position="306"/>
    </location>
    <ligand>
        <name>NAD(+)</name>
        <dbReference type="ChEBI" id="CHEBI:57540"/>
    </ligand>
</feature>
<feature type="binding site" evidence="1">
    <location>
        <position position="360"/>
    </location>
    <ligand>
        <name>NAD(+)</name>
        <dbReference type="ChEBI" id="CHEBI:57540"/>
    </ligand>
</feature>
<name>SAHH_RHOBA</name>
<organism>
    <name type="scientific">Rhodopirellula baltica (strain DSM 10527 / NCIMB 13988 / SH1)</name>
    <dbReference type="NCBI Taxonomy" id="243090"/>
    <lineage>
        <taxon>Bacteria</taxon>
        <taxon>Pseudomonadati</taxon>
        <taxon>Planctomycetota</taxon>
        <taxon>Planctomycetia</taxon>
        <taxon>Pirellulales</taxon>
        <taxon>Pirellulaceae</taxon>
        <taxon>Rhodopirellula</taxon>
    </lineage>
</organism>
<sequence length="448" mass="49134">MSQAETTKLPYKVKDISLADYGRKEIELAENEMPGLMALRSKYGAEKPLKGARIAGCLHMTIQTAVLIETLVELGAEVTWSSCNIFSTQDHAAAAIAAAGIPVYAWKGMTEEEFDWCIEQTLDFPSGEKLNMILDDGGDLTAMVHDRFPELLDNIYGISEETTAGVHRLEVLNKSGKLRVPSINVNDSATKSKFDNLYGCRESLADGVKRATDVMLAGKVAVVCGYGDVGKGCAHSLKSYGCRVLVTEIDPINALQAAMEGFEVTTMEEACKEGRLYVTTTGNKDIILGEHMKQMPNDAILCNIGHFDTEIDIAWAEQQVADGKATVSEIKPSDIGAVDRFTFNDTGRSIIILAKGRLVNLGCATGHPSFVMSSSFTNQVLAQMELYQNRDNDKYGVQVYLLPKELDEEVARLHLEAIGVKLTKLTQEQADYIGVPVEGPYKPNHYRY</sequence>
<protein>
    <recommendedName>
        <fullName evidence="1">Adenosylhomocysteinase</fullName>
        <ecNumber evidence="1">3.13.2.1</ecNumber>
    </recommendedName>
    <alternativeName>
        <fullName evidence="1">S-adenosyl-L-homocysteine hydrolase</fullName>
        <shortName evidence="1">AdoHcyase</shortName>
    </alternativeName>
</protein>
<accession>Q7TTZ5</accession>
<gene>
    <name evidence="1" type="primary">ahcY</name>
    <name type="synonym">sahH</name>
    <name type="ordered locus">RB6285</name>
</gene>
<proteinExistence type="inferred from homology"/>
<reference key="1">
    <citation type="journal article" date="2003" name="Proc. Natl. Acad. Sci. U.S.A.">
        <title>Complete genome sequence of the marine planctomycete Pirellula sp. strain 1.</title>
        <authorList>
            <person name="Gloeckner F.O."/>
            <person name="Kube M."/>
            <person name="Bauer M."/>
            <person name="Teeling H."/>
            <person name="Lombardot T."/>
            <person name="Ludwig W."/>
            <person name="Gade D."/>
            <person name="Beck A."/>
            <person name="Borzym K."/>
            <person name="Heitmann K."/>
            <person name="Rabus R."/>
            <person name="Schlesner H."/>
            <person name="Amann R."/>
            <person name="Reinhardt R."/>
        </authorList>
    </citation>
    <scope>NUCLEOTIDE SEQUENCE [LARGE SCALE GENOMIC DNA]</scope>
    <source>
        <strain>DSM 10527 / NCIMB 13988 / SH1</strain>
    </source>
</reference>
<dbReference type="EC" id="3.13.2.1" evidence="1"/>
<dbReference type="EMBL" id="BX294143">
    <property type="protein sequence ID" value="CAD74707.1"/>
    <property type="molecule type" value="Genomic_DNA"/>
</dbReference>
<dbReference type="RefSeq" id="NP_867162.1">
    <property type="nucleotide sequence ID" value="NC_005027.1"/>
</dbReference>
<dbReference type="RefSeq" id="WP_007327756.1">
    <property type="nucleotide sequence ID" value="NC_005027.1"/>
</dbReference>
<dbReference type="SMR" id="Q7TTZ5"/>
<dbReference type="STRING" id="243090.RB6285"/>
<dbReference type="EnsemblBacteria" id="CAD74707">
    <property type="protein sequence ID" value="CAD74707"/>
    <property type="gene ID" value="RB6285"/>
</dbReference>
<dbReference type="KEGG" id="rba:RB6285"/>
<dbReference type="PATRIC" id="fig|243090.15.peg.3030"/>
<dbReference type="eggNOG" id="COG0499">
    <property type="taxonomic scope" value="Bacteria"/>
</dbReference>
<dbReference type="HOGENOM" id="CLU_025194_2_1_0"/>
<dbReference type="InParanoid" id="Q7TTZ5"/>
<dbReference type="OrthoDB" id="9802717at2"/>
<dbReference type="UniPathway" id="UPA00314">
    <property type="reaction ID" value="UER00076"/>
</dbReference>
<dbReference type="Proteomes" id="UP000001025">
    <property type="component" value="Chromosome"/>
</dbReference>
<dbReference type="GO" id="GO:0005829">
    <property type="term" value="C:cytosol"/>
    <property type="evidence" value="ECO:0000318"/>
    <property type="project" value="GO_Central"/>
</dbReference>
<dbReference type="GO" id="GO:0004013">
    <property type="term" value="F:adenosylhomocysteinase activity"/>
    <property type="evidence" value="ECO:0000318"/>
    <property type="project" value="GO_Central"/>
</dbReference>
<dbReference type="GO" id="GO:0071269">
    <property type="term" value="P:L-homocysteine biosynthetic process"/>
    <property type="evidence" value="ECO:0007669"/>
    <property type="project" value="UniProtKB-UniRule"/>
</dbReference>
<dbReference type="GO" id="GO:0006730">
    <property type="term" value="P:one-carbon metabolic process"/>
    <property type="evidence" value="ECO:0007669"/>
    <property type="project" value="UniProtKB-KW"/>
</dbReference>
<dbReference type="GO" id="GO:0033353">
    <property type="term" value="P:S-adenosylmethionine cycle"/>
    <property type="evidence" value="ECO:0000318"/>
    <property type="project" value="GO_Central"/>
</dbReference>
<dbReference type="CDD" id="cd00401">
    <property type="entry name" value="SAHH"/>
    <property type="match status" value="1"/>
</dbReference>
<dbReference type="FunFam" id="3.40.50.1480:FF:000004">
    <property type="entry name" value="Adenosylhomocysteinase"/>
    <property type="match status" value="1"/>
</dbReference>
<dbReference type="FunFam" id="3.40.50.720:FF:000004">
    <property type="entry name" value="Adenosylhomocysteinase"/>
    <property type="match status" value="1"/>
</dbReference>
<dbReference type="Gene3D" id="3.40.50.1480">
    <property type="entry name" value="Adenosylhomocysteinase-like"/>
    <property type="match status" value="1"/>
</dbReference>
<dbReference type="Gene3D" id="3.40.50.720">
    <property type="entry name" value="NAD(P)-binding Rossmann-like Domain"/>
    <property type="match status" value="1"/>
</dbReference>
<dbReference type="HAMAP" id="MF_00563">
    <property type="entry name" value="AdoHcyase"/>
    <property type="match status" value="1"/>
</dbReference>
<dbReference type="InterPro" id="IPR042172">
    <property type="entry name" value="Adenosylhomocyst_ase-like_sf"/>
</dbReference>
<dbReference type="InterPro" id="IPR000043">
    <property type="entry name" value="Adenosylhomocysteinase-like"/>
</dbReference>
<dbReference type="InterPro" id="IPR015878">
    <property type="entry name" value="Ado_hCys_hydrolase_NAD-bd"/>
</dbReference>
<dbReference type="InterPro" id="IPR036291">
    <property type="entry name" value="NAD(P)-bd_dom_sf"/>
</dbReference>
<dbReference type="InterPro" id="IPR020082">
    <property type="entry name" value="S-Ado-L-homoCys_hydrolase_CS"/>
</dbReference>
<dbReference type="NCBIfam" id="TIGR00936">
    <property type="entry name" value="ahcY"/>
    <property type="match status" value="1"/>
</dbReference>
<dbReference type="NCBIfam" id="NF004005">
    <property type="entry name" value="PRK05476.2-3"/>
    <property type="match status" value="1"/>
</dbReference>
<dbReference type="PANTHER" id="PTHR23420">
    <property type="entry name" value="ADENOSYLHOMOCYSTEINASE"/>
    <property type="match status" value="1"/>
</dbReference>
<dbReference type="PANTHER" id="PTHR23420:SF0">
    <property type="entry name" value="ADENOSYLHOMOCYSTEINASE"/>
    <property type="match status" value="1"/>
</dbReference>
<dbReference type="Pfam" id="PF05221">
    <property type="entry name" value="AdoHcyase"/>
    <property type="match status" value="2"/>
</dbReference>
<dbReference type="Pfam" id="PF00670">
    <property type="entry name" value="AdoHcyase_NAD"/>
    <property type="match status" value="1"/>
</dbReference>
<dbReference type="PIRSF" id="PIRSF001109">
    <property type="entry name" value="Ad_hcy_hydrolase"/>
    <property type="match status" value="1"/>
</dbReference>
<dbReference type="SMART" id="SM00996">
    <property type="entry name" value="AdoHcyase"/>
    <property type="match status" value="1"/>
</dbReference>
<dbReference type="SMART" id="SM00997">
    <property type="entry name" value="AdoHcyase_NAD"/>
    <property type="match status" value="1"/>
</dbReference>
<dbReference type="SUPFAM" id="SSF52283">
    <property type="entry name" value="Formate/glycerate dehydrogenase catalytic domain-like"/>
    <property type="match status" value="1"/>
</dbReference>
<dbReference type="SUPFAM" id="SSF51735">
    <property type="entry name" value="NAD(P)-binding Rossmann-fold domains"/>
    <property type="match status" value="1"/>
</dbReference>
<dbReference type="PROSITE" id="PS00738">
    <property type="entry name" value="ADOHCYASE_1"/>
    <property type="match status" value="1"/>
</dbReference>
<dbReference type="PROSITE" id="PS00739">
    <property type="entry name" value="ADOHCYASE_2"/>
    <property type="match status" value="1"/>
</dbReference>
<evidence type="ECO:0000255" key="1">
    <source>
        <dbReference type="HAMAP-Rule" id="MF_00563"/>
    </source>
</evidence>
<keyword id="KW-0963">Cytoplasm</keyword>
<keyword id="KW-0378">Hydrolase</keyword>
<keyword id="KW-0520">NAD</keyword>
<keyword id="KW-0554">One-carbon metabolism</keyword>
<keyword id="KW-1185">Reference proteome</keyword>
<comment type="function">
    <text evidence="1">May play a key role in the regulation of the intracellular concentration of adenosylhomocysteine.</text>
</comment>
<comment type="catalytic activity">
    <reaction evidence="1">
        <text>S-adenosyl-L-homocysteine + H2O = L-homocysteine + adenosine</text>
        <dbReference type="Rhea" id="RHEA:21708"/>
        <dbReference type="ChEBI" id="CHEBI:15377"/>
        <dbReference type="ChEBI" id="CHEBI:16335"/>
        <dbReference type="ChEBI" id="CHEBI:57856"/>
        <dbReference type="ChEBI" id="CHEBI:58199"/>
        <dbReference type="EC" id="3.13.2.1"/>
    </reaction>
</comment>
<comment type="cofactor">
    <cofactor evidence="1">
        <name>NAD(+)</name>
        <dbReference type="ChEBI" id="CHEBI:57540"/>
    </cofactor>
    <text evidence="1">Binds 1 NAD(+) per subunit.</text>
</comment>
<comment type="pathway">
    <text evidence="1">Amino-acid biosynthesis; L-homocysteine biosynthesis; L-homocysteine from S-adenosyl-L-homocysteine: step 1/1.</text>
</comment>
<comment type="subcellular location">
    <subcellularLocation>
        <location evidence="1">Cytoplasm</location>
    </subcellularLocation>
</comment>
<comment type="similarity">
    <text evidence="1">Belongs to the adenosylhomocysteinase family.</text>
</comment>